<feature type="chain" id="PRO_0000096885" description="Kinetochore-associated protein NNF1">
    <location>
        <begin position="1"/>
        <end position="201"/>
    </location>
</feature>
<feature type="sequence conflict" description="In Ref. 1; CAA63725." evidence="6" ref="1">
    <original>R</original>
    <variation>S</variation>
    <location>
        <position position="55"/>
    </location>
</feature>
<feature type="sequence conflict" description="In Ref. 1; CAA63725." evidence="6" ref="1">
    <original>I</original>
    <variation>M</variation>
    <location>
        <position position="89"/>
    </location>
</feature>
<feature type="sequence conflict" description="In Ref. 1; CAA63725." evidence="6" ref="1">
    <original>L</original>
    <variation>F</variation>
    <location>
        <position position="152"/>
    </location>
</feature>
<feature type="sequence conflict" description="In Ref. 1; CAA63725." evidence="6" ref="1">
    <original>NE</original>
    <variation>KQ</variation>
    <location>
        <begin position="164"/>
        <end position="165"/>
    </location>
</feature>
<feature type="sequence conflict" description="In Ref. 1; CAA63725." evidence="6" ref="1">
    <original>M</original>
    <variation>K</variation>
    <location>
        <position position="193"/>
    </location>
</feature>
<reference key="1">
    <citation type="journal article" date="1997" name="J. Cell Sci.">
        <title>NNF1 is an essential yeast gene required for proper spindle orientation, nucleolar and nuclear envelope structure and mRNA export.</title>
        <authorList>
            <person name="Shan X."/>
            <person name="Xue Z."/>
            <person name="Euskirchen G."/>
            <person name="Melese T."/>
        </authorList>
    </citation>
    <scope>NUCLEOTIDE SEQUENCE [GENOMIC DNA]</scope>
    <source>
        <strain>ATCC 204508 / S288c</strain>
    </source>
</reference>
<reference key="2">
    <citation type="journal article" date="1996" name="EMBO J.">
        <title>Complete nucleotide sequence of Saccharomyces cerevisiae chromosome X.</title>
        <authorList>
            <person name="Galibert F."/>
            <person name="Alexandraki D."/>
            <person name="Baur A."/>
            <person name="Boles E."/>
            <person name="Chalwatzis N."/>
            <person name="Chuat J.-C."/>
            <person name="Coster F."/>
            <person name="Cziepluch C."/>
            <person name="de Haan M."/>
            <person name="Domdey H."/>
            <person name="Durand P."/>
            <person name="Entian K.-D."/>
            <person name="Gatius M."/>
            <person name="Goffeau A."/>
            <person name="Grivell L.A."/>
            <person name="Hennemann A."/>
            <person name="Herbert C.J."/>
            <person name="Heumann K."/>
            <person name="Hilger F."/>
            <person name="Hollenberg C.P."/>
            <person name="Huang M.-E."/>
            <person name="Jacq C."/>
            <person name="Jauniaux J.-C."/>
            <person name="Katsoulou C."/>
            <person name="Kirchrath L."/>
            <person name="Kleine K."/>
            <person name="Kordes E."/>
            <person name="Koetter P."/>
            <person name="Liebl S."/>
            <person name="Louis E.J."/>
            <person name="Manus V."/>
            <person name="Mewes H.-W."/>
            <person name="Miosga T."/>
            <person name="Obermaier B."/>
            <person name="Perea J."/>
            <person name="Pohl T.M."/>
            <person name="Portetelle D."/>
            <person name="Pujol A."/>
            <person name="Purnelle B."/>
            <person name="Ramezani Rad M."/>
            <person name="Rasmussen S.W."/>
            <person name="Rose M."/>
            <person name="Rossau R."/>
            <person name="Schaaff-Gerstenschlaeger I."/>
            <person name="Smits P.H.M."/>
            <person name="Scarcez T."/>
            <person name="Soriano N."/>
            <person name="To Van D."/>
            <person name="Tzermia M."/>
            <person name="Van Broekhoven A."/>
            <person name="Vandenbol M."/>
            <person name="Wedler H."/>
            <person name="von Wettstein D."/>
            <person name="Wambutt R."/>
            <person name="Zagulski M."/>
            <person name="Zollner A."/>
            <person name="Karpfinger-Hartl L."/>
        </authorList>
    </citation>
    <scope>NUCLEOTIDE SEQUENCE [LARGE SCALE GENOMIC DNA]</scope>
    <source>
        <strain>ATCC 204508 / S288c</strain>
    </source>
</reference>
<reference key="3">
    <citation type="journal article" date="2014" name="G3 (Bethesda)">
        <title>The reference genome sequence of Saccharomyces cerevisiae: Then and now.</title>
        <authorList>
            <person name="Engel S.R."/>
            <person name="Dietrich F.S."/>
            <person name="Fisk D.G."/>
            <person name="Binkley G."/>
            <person name="Balakrishnan R."/>
            <person name="Costanzo M.C."/>
            <person name="Dwight S.S."/>
            <person name="Hitz B.C."/>
            <person name="Karra K."/>
            <person name="Nash R.S."/>
            <person name="Weng S."/>
            <person name="Wong E.D."/>
            <person name="Lloyd P."/>
            <person name="Skrzypek M.S."/>
            <person name="Miyasato S.R."/>
            <person name="Simison M."/>
            <person name="Cherry J.M."/>
        </authorList>
    </citation>
    <scope>GENOME REANNOTATION</scope>
    <source>
        <strain>ATCC 204508 / S288c</strain>
    </source>
</reference>
<reference key="4">
    <citation type="journal article" date="2007" name="Genome Res.">
        <title>Approaching a complete repository of sequence-verified protein-encoding clones for Saccharomyces cerevisiae.</title>
        <authorList>
            <person name="Hu Y."/>
            <person name="Rolfs A."/>
            <person name="Bhullar B."/>
            <person name="Murthy T.V.S."/>
            <person name="Zhu C."/>
            <person name="Berger M.F."/>
            <person name="Camargo A.A."/>
            <person name="Kelley F."/>
            <person name="McCarron S."/>
            <person name="Jepson D."/>
            <person name="Richardson A."/>
            <person name="Raphael J."/>
            <person name="Moreira D."/>
            <person name="Taycher E."/>
            <person name="Zuo D."/>
            <person name="Mohr S."/>
            <person name="Kane M.F."/>
            <person name="Williamson J."/>
            <person name="Simpson A.J.G."/>
            <person name="Bulyk M.L."/>
            <person name="Harlow E."/>
            <person name="Marsischky G."/>
            <person name="Kolodner R.D."/>
            <person name="LaBaer J."/>
        </authorList>
    </citation>
    <scope>NUCLEOTIDE SEQUENCE [GENOMIC DNA]</scope>
    <source>
        <strain>ATCC 204508 / S288c</strain>
    </source>
</reference>
<reference key="5">
    <citation type="journal article" date="2002" name="Eukaryot. Cell">
        <title>Nnf1p, Dsn1p, Mtw1p, and Nsl1p: a new group of proteins important for chromosome segregation in Saccharomyces cerevisiae.</title>
        <authorList>
            <person name="Euskirchen G.M."/>
        </authorList>
    </citation>
    <scope>FUNCTION</scope>
    <scope>SUBUNIT</scope>
    <scope>SUBCELLULAR LOCATION</scope>
</reference>
<reference key="6">
    <citation type="journal article" date="2003" name="Dev. Cell">
        <title>An Mtw1 complex promotes kinetochore biorientation that is monitored by the Ipl1/Aurora protein kinase.</title>
        <authorList>
            <person name="Pinsky B.A."/>
            <person name="Tatsutani S.Y."/>
            <person name="Collins K.A."/>
            <person name="Biggins S."/>
        </authorList>
    </citation>
    <scope>IDENTIFICATION IN THE MIND COMPLEX</scope>
</reference>
<reference key="7">
    <citation type="journal article" date="2003" name="EMBO J.">
        <title>Nsl1p is essential for the establishment of bipolarity and the localization of the Dam-Duo complex.</title>
        <authorList>
            <person name="Scharfenberger M."/>
            <person name="Ortiz J."/>
            <person name="Grau N."/>
            <person name="Janke C."/>
            <person name="Schiebel E."/>
            <person name="Lechner J."/>
        </authorList>
    </citation>
    <scope>IDENTIFICATION IN THE MIND COMPLEX</scope>
    <scope>SUBCELLULAR LOCATION</scope>
</reference>
<reference key="8">
    <citation type="journal article" date="2003" name="Genes Dev.">
        <title>Hierarchical assembly of the budding yeast kinetochore from multiple subcomplexes.</title>
        <authorList>
            <person name="De Wulf P."/>
            <person name="McAinsh A.D."/>
            <person name="Sorger P.K."/>
        </authorList>
    </citation>
    <scope>IDENTIFICATION IN THE MIND COMPLEX</scope>
    <scope>FUNCTION OF THE MIND COMPLEX</scope>
</reference>
<reference key="9">
    <citation type="journal article" date="2003" name="Mol. Cell">
        <title>Assigning function to yeast proteins by integration of technologies.</title>
        <authorList>
            <person name="Hazbun T.R."/>
            <person name="Malmstroem L."/>
            <person name="Anderson S."/>
            <person name="Graczyk B.J."/>
            <person name="Fox B."/>
            <person name="Riffle M."/>
            <person name="Sundin B.A."/>
            <person name="Aranda J.D."/>
            <person name="McDonald W.H."/>
            <person name="Chiu C.-H."/>
            <person name="Snydsman B.E."/>
            <person name="Bradley P."/>
            <person name="Muller E.G.D."/>
            <person name="Fields S."/>
            <person name="Baker D."/>
            <person name="Yates J.R. III"/>
            <person name="Davis T.N."/>
        </authorList>
    </citation>
    <scope>IDENTIFICATION BY MASS SPECTROMETRY</scope>
</reference>
<reference key="10">
    <citation type="journal article" date="2003" name="Nature">
        <title>Global analysis of protein expression in yeast.</title>
        <authorList>
            <person name="Ghaemmaghami S."/>
            <person name="Huh W.-K."/>
            <person name="Bower K."/>
            <person name="Howson R.W."/>
            <person name="Belle A."/>
            <person name="Dephoure N."/>
            <person name="O'Shea E.K."/>
            <person name="Weissman J.S."/>
        </authorList>
    </citation>
    <scope>LEVEL OF PROTEIN EXPRESSION [LARGE SCALE ANALYSIS]</scope>
</reference>
<reference key="11">
    <citation type="journal article" date="2012" name="Proc. Natl. Acad. Sci. U.S.A.">
        <title>N-terminal acetylome analyses and functional insights of the N-terminal acetyltransferase NatB.</title>
        <authorList>
            <person name="Van Damme P."/>
            <person name="Lasa M."/>
            <person name="Polevoda B."/>
            <person name="Gazquez C."/>
            <person name="Elosegui-Artola A."/>
            <person name="Kim D.S."/>
            <person name="De Juan-Pardo E."/>
            <person name="Demeyer K."/>
            <person name="Hole K."/>
            <person name="Larrea E."/>
            <person name="Timmerman E."/>
            <person name="Prieto J."/>
            <person name="Arnesen T."/>
            <person name="Sherman F."/>
            <person name="Gevaert K."/>
            <person name="Aldabe R."/>
        </authorList>
    </citation>
    <scope>IDENTIFICATION BY MASS SPECTROMETRY [LARGE SCALE ANALYSIS]</scope>
</reference>
<organism>
    <name type="scientific">Saccharomyces cerevisiae (strain ATCC 204508 / S288c)</name>
    <name type="common">Baker's yeast</name>
    <dbReference type="NCBI Taxonomy" id="559292"/>
    <lineage>
        <taxon>Eukaryota</taxon>
        <taxon>Fungi</taxon>
        <taxon>Dikarya</taxon>
        <taxon>Ascomycota</taxon>
        <taxon>Saccharomycotina</taxon>
        <taxon>Saccharomycetes</taxon>
        <taxon>Saccharomycetales</taxon>
        <taxon>Saccharomycetaceae</taxon>
        <taxon>Saccharomyces</taxon>
    </lineage>
</organism>
<accession>P47149</accession>
<accession>D6VWT1</accession>
<accession>Q06779</accession>
<dbReference type="EMBL" id="X93350">
    <property type="protein sequence ID" value="CAA63725.1"/>
    <property type="molecule type" value="Genomic_DNA"/>
</dbReference>
<dbReference type="EMBL" id="Z49612">
    <property type="protein sequence ID" value="CAA89642.1"/>
    <property type="molecule type" value="Genomic_DNA"/>
</dbReference>
<dbReference type="EMBL" id="AY558256">
    <property type="protein sequence ID" value="AAS56582.1"/>
    <property type="molecule type" value="Genomic_DNA"/>
</dbReference>
<dbReference type="EMBL" id="BK006943">
    <property type="protein sequence ID" value="DAA08897.1"/>
    <property type="molecule type" value="Genomic_DNA"/>
</dbReference>
<dbReference type="PIR" id="S57135">
    <property type="entry name" value="S57135"/>
</dbReference>
<dbReference type="RefSeq" id="NP_012646.3">
    <property type="nucleotide sequence ID" value="NM_001181770.3"/>
</dbReference>
<dbReference type="SMR" id="P47149"/>
<dbReference type="BioGRID" id="33868">
    <property type="interactions" value="259"/>
</dbReference>
<dbReference type="ComplexPortal" id="CPX-1186">
    <property type="entry name" value="Kinetochore MIS12 complex"/>
</dbReference>
<dbReference type="DIP" id="DIP-3017N"/>
<dbReference type="FunCoup" id="P47149">
    <property type="interactions" value="114"/>
</dbReference>
<dbReference type="IntAct" id="P47149">
    <property type="interactions" value="27"/>
</dbReference>
<dbReference type="MINT" id="P47149"/>
<dbReference type="STRING" id="4932.YJR112W"/>
<dbReference type="iPTMnet" id="P47149"/>
<dbReference type="PaxDb" id="4932-YJR112W"/>
<dbReference type="PeptideAtlas" id="P47149"/>
<dbReference type="EnsemblFungi" id="YJR112W_mRNA">
    <property type="protein sequence ID" value="YJR112W"/>
    <property type="gene ID" value="YJR112W"/>
</dbReference>
<dbReference type="GeneID" id="853576"/>
<dbReference type="KEGG" id="sce:YJR112W"/>
<dbReference type="AGR" id="SGD:S000003873"/>
<dbReference type="SGD" id="S000003873">
    <property type="gene designation" value="NNF1"/>
</dbReference>
<dbReference type="VEuPathDB" id="FungiDB:YJR112W"/>
<dbReference type="eggNOG" id="ENOG502RZTQ">
    <property type="taxonomic scope" value="Eukaryota"/>
</dbReference>
<dbReference type="HOGENOM" id="CLU_117280_0_0_1"/>
<dbReference type="InParanoid" id="P47149"/>
<dbReference type="OMA" id="SSCFPEY"/>
<dbReference type="OrthoDB" id="18453at2759"/>
<dbReference type="BioCyc" id="YEAST:G3O-31735-MONOMER"/>
<dbReference type="BioGRID-ORCS" id="853576">
    <property type="hits" value="0 hits in 10 CRISPR screens"/>
</dbReference>
<dbReference type="CD-CODE" id="876000F7">
    <property type="entry name" value="Centrosome"/>
</dbReference>
<dbReference type="PRO" id="PR:P47149"/>
<dbReference type="Proteomes" id="UP000002311">
    <property type="component" value="Chromosome X"/>
</dbReference>
<dbReference type="RNAct" id="P47149">
    <property type="molecule type" value="protein"/>
</dbReference>
<dbReference type="GO" id="GO:0000776">
    <property type="term" value="C:kinetochore"/>
    <property type="evidence" value="ECO:0000314"/>
    <property type="project" value="SGD"/>
</dbReference>
<dbReference type="GO" id="GO:0000444">
    <property type="term" value="C:MIS12/MIND type complex"/>
    <property type="evidence" value="ECO:0000314"/>
    <property type="project" value="SGD"/>
</dbReference>
<dbReference type="GO" id="GO:0005634">
    <property type="term" value="C:nucleus"/>
    <property type="evidence" value="ECO:0000314"/>
    <property type="project" value="ComplexPortal"/>
</dbReference>
<dbReference type="GO" id="GO:0000940">
    <property type="term" value="C:outer kinetochore"/>
    <property type="evidence" value="ECO:0000314"/>
    <property type="project" value="UniProtKB"/>
</dbReference>
<dbReference type="GO" id="GO:0000922">
    <property type="term" value="C:spindle pole"/>
    <property type="evidence" value="ECO:0000269"/>
    <property type="project" value="ComplexPortal"/>
</dbReference>
<dbReference type="GO" id="GO:0008608">
    <property type="term" value="P:attachment of spindle microtubules to kinetochore"/>
    <property type="evidence" value="ECO:0000303"/>
    <property type="project" value="ComplexPortal"/>
</dbReference>
<dbReference type="GO" id="GO:0051301">
    <property type="term" value="P:cell division"/>
    <property type="evidence" value="ECO:0007669"/>
    <property type="project" value="UniProtKB-KW"/>
</dbReference>
<dbReference type="GO" id="GO:0007059">
    <property type="term" value="P:chromosome segregation"/>
    <property type="evidence" value="ECO:0000314"/>
    <property type="project" value="SGD"/>
</dbReference>
<dbReference type="InterPro" id="IPR016851">
    <property type="entry name" value="Nnf1"/>
</dbReference>
<dbReference type="InterPro" id="IPR007128">
    <property type="entry name" value="PMF1/Nnf1"/>
</dbReference>
<dbReference type="PANTHER" id="PTHR15459">
    <property type="entry name" value="POLYAMINE-MODULATED FACTOR 1"/>
    <property type="match status" value="1"/>
</dbReference>
<dbReference type="PANTHER" id="PTHR15459:SF3">
    <property type="entry name" value="POLYAMINE-MODULATED FACTOR 1"/>
    <property type="match status" value="1"/>
</dbReference>
<dbReference type="Pfam" id="PF03980">
    <property type="entry name" value="Nnf1"/>
    <property type="match status" value="1"/>
</dbReference>
<dbReference type="PIRSF" id="PIRSF027153">
    <property type="entry name" value="Nnf1p"/>
    <property type="match status" value="1"/>
</dbReference>
<evidence type="ECO:0000269" key="1">
    <source>
    </source>
</evidence>
<evidence type="ECO:0000269" key="2">
    <source>
    </source>
</evidence>
<evidence type="ECO:0000269" key="3">
    <source>
    </source>
</evidence>
<evidence type="ECO:0000269" key="4">
    <source>
    </source>
</evidence>
<evidence type="ECO:0000269" key="5">
    <source>
    </source>
</evidence>
<evidence type="ECO:0000305" key="6"/>
<sequence>MVNSHGIRYIRLKQVFNRALDQSISKLQSWDKVSSCFPQYVNSKQGAINVANCQRQLTEFWTELCQREFKEIMEERNVEQKLNELDELILEAKERYTDRDQDEVNKGPAIDELSSKELVECHLYSQRMHAIHEIDERLAKVNEMNDQLAQELKDLETQVEVEKNEIGKMYDEYLGSHTDQPANVLLVQSLNDMVLELKENY</sequence>
<comment type="function">
    <text evidence="1 4">Acts as an essential component of the kinetochore MIND complex, which is required for the spindle checkpoint and kinetochore integrity. MIND plays a role in establishing a bipolar spindle-kinetochore interaction by joining kinetochore subunits contacting DNA to those contacting microtubules. NNF1 is required for a number of nuclear functions. Cells depleted of NNF11 or containing a temperature-sensitive NNF1 mutation have elongated microtubules and become bi- and multinucleate. They also have a fragmented nucleolus and accumulate poly(A)+ RNA inside the nucleus.</text>
</comment>
<comment type="subunit">
    <text evidence="1 3 4 5">Component of the MIND kinetochore complex, which is composed of at least MTW1, NNF1, NSL1 and DSN1.</text>
</comment>
<comment type="interaction">
    <interactant intactId="EBI-12098">
        <id>P47149</id>
    </interactant>
    <interactant intactId="EBI-11606">
        <id>P39731</id>
        <label>MTW1</label>
    </interactant>
    <organismsDiffer>false</organismsDiffer>
    <experiments>7</experiments>
</comment>
<comment type="interaction">
    <interactant intactId="EBI-12098">
        <id>P47149</id>
    </interactant>
    <interactant intactId="EBI-25247">
        <id>P40460</id>
        <label>NDC80</label>
    </interactant>
    <organismsDiffer>false</organismsDiffer>
    <experiments>3</experiments>
</comment>
<comment type="interaction">
    <interactant intactId="EBI-12098">
        <id>P47149</id>
    </interactant>
    <interactant intactId="EBI-12838">
        <id>P39946</id>
        <label>PAC1</label>
    </interactant>
    <organismsDiffer>false</organismsDiffer>
    <experiments>3</experiments>
</comment>
<comment type="interaction">
    <interactant intactId="EBI-12098">
        <id>P47149</id>
    </interactant>
    <interactant intactId="EBI-17402">
        <id>P32908</id>
        <label>SMC1</label>
    </interactant>
    <organismsDiffer>false</organismsDiffer>
    <experiments>6</experiments>
</comment>
<comment type="subcellular location">
    <subcellularLocation>
        <location evidence="1">Nucleus</location>
    </subcellularLocation>
    <subcellularLocation>
        <location evidence="1 5">Chromosome</location>
        <location evidence="1 5">Centromere</location>
        <location evidence="1 5">Kinetochore</location>
    </subcellularLocation>
    <text>Associated with the kinetochore (PubMed:12455957, PubMed:14657030).</text>
</comment>
<comment type="miscellaneous">
    <text evidence="2">Present with 2070 molecules/cell in log phase SD medium.</text>
</comment>
<proteinExistence type="evidence at protein level"/>
<gene>
    <name type="primary">NNF1</name>
    <name type="ordered locus">YJR112W</name>
    <name type="ORF">J2011</name>
</gene>
<keyword id="KW-0131">Cell cycle</keyword>
<keyword id="KW-0132">Cell division</keyword>
<keyword id="KW-0137">Centromere</keyword>
<keyword id="KW-0158">Chromosome</keyword>
<keyword id="KW-0995">Kinetochore</keyword>
<keyword id="KW-0498">Mitosis</keyword>
<keyword id="KW-0539">Nucleus</keyword>
<keyword id="KW-1185">Reference proteome</keyword>
<name>NNF1_YEAST</name>
<protein>
    <recommendedName>
        <fullName>Kinetochore-associated protein NNF1</fullName>
    </recommendedName>
</protein>